<sequence length="209" mass="22898">LWLGTAGMFLGMLYFIARGWGETDGRRQKFYIATILITAIAFVNYLAMALGFGLTFIEFGGEQHPIYWARYTDWLFTTPLLLYDLGLLAGADRNTIYSLVSLDVLMIGTGVVATLSAGSGVLSAGAERLVWWGISTAFLLVLLYFLFSSLSGRVANLPSDTRSTFKTLRNLVTVVWLVYPVWWLVGSEGLGLVGIGIETAGFMVIDLVA</sequence>
<name>BACR_HALHS</name>
<comment type="function">
    <text>Light-driven proton pump.</text>
</comment>
<comment type="subcellular location">
    <subcellularLocation>
        <location>Cell membrane</location>
        <topology>Multi-pass membrane protein</topology>
    </subcellularLocation>
</comment>
<comment type="similarity">
    <text evidence="2">Belongs to the archaeal/bacterial/fungal opsin family.</text>
</comment>
<keyword id="KW-1003">Cell membrane</keyword>
<keyword id="KW-0157">Chromophore</keyword>
<keyword id="KW-0375">Hydrogen ion transport</keyword>
<keyword id="KW-0406">Ion transport</keyword>
<keyword id="KW-0472">Membrane</keyword>
<keyword id="KW-0600">Photoreceptor protein</keyword>
<keyword id="KW-0675">Receptor</keyword>
<keyword id="KW-0681">Retinal protein</keyword>
<keyword id="KW-0716">Sensory transduction</keyword>
<keyword id="KW-0812">Transmembrane</keyword>
<keyword id="KW-1133">Transmembrane helix</keyword>
<keyword id="KW-0813">Transport</keyword>
<dbReference type="EMBL" id="D11058">
    <property type="protein sequence ID" value="BAA01801.1"/>
    <property type="molecule type" value="Genomic_DNA"/>
</dbReference>
<dbReference type="PIR" id="B47686">
    <property type="entry name" value="B47686"/>
</dbReference>
<dbReference type="SMR" id="P33972"/>
<dbReference type="GO" id="GO:0005886">
    <property type="term" value="C:plasma membrane"/>
    <property type="evidence" value="ECO:0007669"/>
    <property type="project" value="UniProtKB-SubCell"/>
</dbReference>
<dbReference type="GO" id="GO:0005216">
    <property type="term" value="F:monoatomic ion channel activity"/>
    <property type="evidence" value="ECO:0007669"/>
    <property type="project" value="InterPro"/>
</dbReference>
<dbReference type="GO" id="GO:0009881">
    <property type="term" value="F:photoreceptor activity"/>
    <property type="evidence" value="ECO:0007669"/>
    <property type="project" value="UniProtKB-KW"/>
</dbReference>
<dbReference type="GO" id="GO:0007602">
    <property type="term" value="P:phototransduction"/>
    <property type="evidence" value="ECO:0007669"/>
    <property type="project" value="UniProtKB-KW"/>
</dbReference>
<dbReference type="GO" id="GO:1902600">
    <property type="term" value="P:proton transmembrane transport"/>
    <property type="evidence" value="ECO:0007669"/>
    <property type="project" value="UniProtKB-KW"/>
</dbReference>
<dbReference type="Gene3D" id="1.20.1070.10">
    <property type="entry name" value="Rhodopsin 7-helix transmembrane proteins"/>
    <property type="match status" value="1"/>
</dbReference>
<dbReference type="InterPro" id="IPR001425">
    <property type="entry name" value="Arc/bac/fun_rhodopsins"/>
</dbReference>
<dbReference type="InterPro" id="IPR018229">
    <property type="entry name" value="Rhodopsin_retinal_BS"/>
</dbReference>
<dbReference type="PANTHER" id="PTHR28286">
    <property type="match status" value="1"/>
</dbReference>
<dbReference type="PANTHER" id="PTHR28286:SF2">
    <property type="entry name" value="BACTERIORHODOPSIN _OPSIN, NOPA (EUROFUNG)"/>
    <property type="match status" value="1"/>
</dbReference>
<dbReference type="Pfam" id="PF01036">
    <property type="entry name" value="Bac_rhodopsin"/>
    <property type="match status" value="1"/>
</dbReference>
<dbReference type="PRINTS" id="PR00251">
    <property type="entry name" value="BACTRLOPSIN"/>
</dbReference>
<dbReference type="SMART" id="SM01021">
    <property type="entry name" value="Bac_rhodopsin"/>
    <property type="match status" value="1"/>
</dbReference>
<dbReference type="SUPFAM" id="SSF81321">
    <property type="entry name" value="Family A G protein-coupled receptor-like"/>
    <property type="match status" value="1"/>
</dbReference>
<dbReference type="PROSITE" id="PS00950">
    <property type="entry name" value="BACTERIAL_OPSIN_1"/>
    <property type="match status" value="1"/>
</dbReference>
<reference key="1">
    <citation type="journal article" date="1992" name="J. Gen. Microbiol.">
        <title>The primary structures of helices A to G of three new bacteriorhodopsin-like retinal proteins.</title>
        <authorList>
            <person name="Otomo J."/>
            <person name="Urabe Y."/>
            <person name="Tomioka H."/>
            <person name="Sasabe H."/>
        </authorList>
    </citation>
    <scope>NUCLEOTIDE SEQUENCE [GENOMIC DNA]</scope>
</reference>
<evidence type="ECO:0000250" key="1"/>
<evidence type="ECO:0000305" key="2"/>
<proteinExistence type="inferred from homology"/>
<organism>
    <name type="scientific">Halobacterium halobium (strain shark)</name>
    <dbReference type="NCBI Taxonomy" id="33005"/>
    <lineage>
        <taxon>Archaea</taxon>
        <taxon>Methanobacteriati</taxon>
        <taxon>Methanobacteriota</taxon>
        <taxon>Stenosarchaea group</taxon>
        <taxon>Halobacteria</taxon>
        <taxon>Halobacteriales</taxon>
        <taxon>Halobacteriaceae</taxon>
        <taxon>Halobacterium</taxon>
    </lineage>
</organism>
<gene>
    <name type="primary">bop</name>
</gene>
<accession>P33972</accession>
<feature type="chain" id="PRO_0000196271" description="Bacteriorhodopsin">
    <location>
        <begin position="1" status="less than"/>
        <end position="209" status="greater than"/>
    </location>
</feature>
<feature type="transmembrane region" description="Helical; Name=Helix A" evidence="1">
    <location>
        <begin position="1" status="less than"/>
        <end position="17"/>
    </location>
</feature>
<feature type="topological domain" description="Cytoplasmic" evidence="1">
    <location>
        <begin position="18"/>
        <end position="31"/>
    </location>
</feature>
<feature type="transmembrane region" description="Helical; Name=Helix B" evidence="1">
    <location>
        <begin position="32"/>
        <end position="50"/>
    </location>
</feature>
<feature type="topological domain" description="Extracellular" evidence="1">
    <location>
        <begin position="51"/>
        <end position="66"/>
    </location>
</feature>
<feature type="transmembrane region" description="Helical; Name=Helix C" evidence="1">
    <location>
        <begin position="67"/>
        <end position="84"/>
    </location>
</feature>
<feature type="topological domain" description="Cytoplasmic" evidence="1">
    <location>
        <begin position="85"/>
        <end position="95"/>
    </location>
</feature>
<feature type="transmembrane region" description="Helical; Name=Helix D" evidence="1">
    <location>
        <begin position="96"/>
        <end position="115"/>
    </location>
</feature>
<feature type="topological domain" description="Extracellular" evidence="1">
    <location>
        <begin position="116"/>
        <end position="128"/>
    </location>
</feature>
<feature type="transmembrane region" description="Helical; Name=Helix E" evidence="1">
    <location>
        <begin position="129"/>
        <end position="148"/>
    </location>
</feature>
<feature type="topological domain" description="Cytoplasmic" evidence="1">
    <location>
        <begin position="149"/>
        <end position="166"/>
    </location>
</feature>
<feature type="transmembrane region" description="Helical; Name=Helix F" evidence="1">
    <location>
        <begin position="167"/>
        <end position="185"/>
    </location>
</feature>
<feature type="topological domain" description="Extracellular" evidence="1">
    <location>
        <begin position="186"/>
        <end position="197"/>
    </location>
</feature>
<feature type="transmembrane region" description="Helical; Name=Helix G" evidence="1">
    <location>
        <begin position="198"/>
        <end position="209" status="greater than"/>
    </location>
</feature>
<feature type="site" description="Primary proton acceptor" evidence="1">
    <location>
        <position position="73"/>
    </location>
</feature>
<feature type="non-terminal residue">
    <location>
        <position position="1"/>
    </location>
</feature>
<feature type="non-terminal residue">
    <location>
        <position position="209"/>
    </location>
</feature>
<protein>
    <recommendedName>
        <fullName>Bacteriorhodopsin</fullName>
        <shortName>BR</shortName>
    </recommendedName>
</protein>